<reference key="1">
    <citation type="submission" date="2007-06" db="EMBL/GenBank/DDBJ databases">
        <title>Complete sequence of Methanococcus aeolicus Nankai-3.</title>
        <authorList>
            <consortium name="US DOE Joint Genome Institute"/>
            <person name="Copeland A."/>
            <person name="Lucas S."/>
            <person name="Lapidus A."/>
            <person name="Barry K."/>
            <person name="Glavina del Rio T."/>
            <person name="Dalin E."/>
            <person name="Tice H."/>
            <person name="Pitluck S."/>
            <person name="Chain P."/>
            <person name="Malfatti S."/>
            <person name="Shin M."/>
            <person name="Vergez L."/>
            <person name="Schmutz J."/>
            <person name="Larimer F."/>
            <person name="Land M."/>
            <person name="Hauser L."/>
            <person name="Kyrpides N."/>
            <person name="Lykidis A."/>
            <person name="Sieprawska-Lupa M."/>
            <person name="Whitman W.B."/>
            <person name="Richardson P."/>
        </authorList>
    </citation>
    <scope>NUCLEOTIDE SEQUENCE [LARGE SCALE GENOMIC DNA]</scope>
    <source>
        <strain>ATCC BAA-1280 / DSM 17508 / OCM 812 / Nankai-3</strain>
    </source>
</reference>
<evidence type="ECO:0000255" key="1">
    <source>
        <dbReference type="HAMAP-Rule" id="MF_00290"/>
    </source>
</evidence>
<organism>
    <name type="scientific">Methanococcus aeolicus (strain ATCC BAA-1280 / DSM 17508 / OCM 812 / Nankai-3)</name>
    <dbReference type="NCBI Taxonomy" id="419665"/>
    <lineage>
        <taxon>Archaea</taxon>
        <taxon>Methanobacteriati</taxon>
        <taxon>Methanobacteriota</taxon>
        <taxon>Methanomada group</taxon>
        <taxon>Methanococci</taxon>
        <taxon>Methanococcales</taxon>
        <taxon>Methanococcaceae</taxon>
        <taxon>Methanococcus</taxon>
    </lineage>
</organism>
<protein>
    <recommendedName>
        <fullName evidence="1">tRNA (guanine(26)-N(2))-dimethyltransferase</fullName>
        <ecNumber evidence="1">2.1.1.216</ecNumber>
    </recommendedName>
    <alternativeName>
        <fullName evidence="1">tRNA 2,2-dimethylguanosine-26 methyltransferase</fullName>
    </alternativeName>
    <alternativeName>
        <fullName evidence="1">tRNA(guanine-26,N(2)-N(2)) methyltransferase</fullName>
    </alternativeName>
    <alternativeName>
        <fullName evidence="1">tRNA(m(2,2)G26)dimethyltransferase</fullName>
    </alternativeName>
</protein>
<feature type="chain" id="PRO_1000114976" description="tRNA (guanine(26)-N(2))-dimethyltransferase">
    <location>
        <begin position="1"/>
        <end position="375"/>
    </location>
</feature>
<feature type="domain" description="Trm1 methyltransferase" evidence="1">
    <location>
        <begin position="2"/>
        <end position="368"/>
    </location>
</feature>
<feature type="binding site" evidence="1">
    <location>
        <position position="35"/>
    </location>
    <ligand>
        <name>S-adenosyl-L-methionine</name>
        <dbReference type="ChEBI" id="CHEBI:59789"/>
    </ligand>
</feature>
<feature type="binding site" evidence="1">
    <location>
        <position position="66"/>
    </location>
    <ligand>
        <name>S-adenosyl-L-methionine</name>
        <dbReference type="ChEBI" id="CHEBI:59789"/>
    </ligand>
</feature>
<feature type="binding site" evidence="1">
    <location>
        <position position="89"/>
    </location>
    <ligand>
        <name>S-adenosyl-L-methionine</name>
        <dbReference type="ChEBI" id="CHEBI:59789"/>
    </ligand>
</feature>
<feature type="binding site" evidence="1">
    <location>
        <position position="116"/>
    </location>
    <ligand>
        <name>S-adenosyl-L-methionine</name>
        <dbReference type="ChEBI" id="CHEBI:59789"/>
    </ligand>
</feature>
<feature type="binding site" evidence="1">
    <location>
        <position position="117"/>
    </location>
    <ligand>
        <name>S-adenosyl-L-methionine</name>
        <dbReference type="ChEBI" id="CHEBI:59789"/>
    </ligand>
</feature>
<keyword id="KW-0489">Methyltransferase</keyword>
<keyword id="KW-0694">RNA-binding</keyword>
<keyword id="KW-0949">S-adenosyl-L-methionine</keyword>
<keyword id="KW-0808">Transferase</keyword>
<keyword id="KW-0819">tRNA processing</keyword>
<keyword id="KW-0820">tRNA-binding</keyword>
<name>TRM1_META3</name>
<dbReference type="EC" id="2.1.1.216" evidence="1"/>
<dbReference type="EMBL" id="CP000743">
    <property type="protein sequence ID" value="ABR56208.1"/>
    <property type="molecule type" value="Genomic_DNA"/>
</dbReference>
<dbReference type="RefSeq" id="WP_011973340.1">
    <property type="nucleotide sequence ID" value="NC_009635.1"/>
</dbReference>
<dbReference type="SMR" id="A6UUN6"/>
<dbReference type="STRING" id="419665.Maeo_0624"/>
<dbReference type="GeneID" id="5327373"/>
<dbReference type="KEGG" id="mae:Maeo_0624"/>
<dbReference type="eggNOG" id="arCOG01219">
    <property type="taxonomic scope" value="Archaea"/>
</dbReference>
<dbReference type="HOGENOM" id="CLU_010862_5_1_2"/>
<dbReference type="OrthoDB" id="372177at2157"/>
<dbReference type="Proteomes" id="UP000001106">
    <property type="component" value="Chromosome"/>
</dbReference>
<dbReference type="GO" id="GO:0160104">
    <property type="term" value="F:tRNA (guanine(26)-N2)-dimethyltransferase activity"/>
    <property type="evidence" value="ECO:0007669"/>
    <property type="project" value="UniProtKB-UniRule"/>
</dbReference>
<dbReference type="GO" id="GO:0000049">
    <property type="term" value="F:tRNA binding"/>
    <property type="evidence" value="ECO:0007669"/>
    <property type="project" value="UniProtKB-KW"/>
</dbReference>
<dbReference type="GO" id="GO:0002940">
    <property type="term" value="P:tRNA N2-guanine methylation"/>
    <property type="evidence" value="ECO:0007669"/>
    <property type="project" value="TreeGrafter"/>
</dbReference>
<dbReference type="Gene3D" id="3.30.56.70">
    <property type="entry name" value="N2,N2-dimethylguanosine tRNA methyltransferase, C-terminal domain"/>
    <property type="match status" value="1"/>
</dbReference>
<dbReference type="Gene3D" id="3.40.50.150">
    <property type="entry name" value="Vaccinia Virus protein VP39"/>
    <property type="match status" value="1"/>
</dbReference>
<dbReference type="HAMAP" id="MF_00290">
    <property type="entry name" value="tRNA_dimethyltr_TRM1"/>
    <property type="match status" value="1"/>
</dbReference>
<dbReference type="InterPro" id="IPR029063">
    <property type="entry name" value="SAM-dependent_MTases_sf"/>
</dbReference>
<dbReference type="InterPro" id="IPR002905">
    <property type="entry name" value="Trm1"/>
</dbReference>
<dbReference type="InterPro" id="IPR022923">
    <property type="entry name" value="TRM1_arc_bac"/>
</dbReference>
<dbReference type="InterPro" id="IPR042296">
    <property type="entry name" value="tRNA_met_Trm1_C"/>
</dbReference>
<dbReference type="NCBIfam" id="TIGR00308">
    <property type="entry name" value="TRM1"/>
    <property type="match status" value="1"/>
</dbReference>
<dbReference type="PANTHER" id="PTHR10631">
    <property type="entry name" value="N 2 ,N 2 -DIMETHYLGUANOSINE TRNA METHYLTRANSFERASE"/>
    <property type="match status" value="1"/>
</dbReference>
<dbReference type="PANTHER" id="PTHR10631:SF3">
    <property type="entry name" value="TRNA (GUANINE(26)-N(2))-DIMETHYLTRANSFERASE"/>
    <property type="match status" value="1"/>
</dbReference>
<dbReference type="Pfam" id="PF02005">
    <property type="entry name" value="TRM"/>
    <property type="match status" value="1"/>
</dbReference>
<dbReference type="SUPFAM" id="SSF53335">
    <property type="entry name" value="S-adenosyl-L-methionine-dependent methyltransferases"/>
    <property type="match status" value="1"/>
</dbReference>
<dbReference type="PROSITE" id="PS51626">
    <property type="entry name" value="SAM_MT_TRM1"/>
    <property type="match status" value="1"/>
</dbReference>
<gene>
    <name evidence="1" type="primary">trm1</name>
    <name type="ordered locus">Maeo_0624</name>
</gene>
<accession>A6UUN6</accession>
<comment type="function">
    <text evidence="1">Dimethylates a single guanine residue at position 26 of a number of tRNAs using S-adenosyl-L-methionine as donor of the methyl groups.</text>
</comment>
<comment type="catalytic activity">
    <reaction evidence="1">
        <text>guanosine(26) in tRNA + 2 S-adenosyl-L-methionine = N(2)-dimethylguanosine(26) in tRNA + 2 S-adenosyl-L-homocysteine + 2 H(+)</text>
        <dbReference type="Rhea" id="RHEA:43140"/>
        <dbReference type="Rhea" id="RHEA-COMP:10359"/>
        <dbReference type="Rhea" id="RHEA-COMP:10360"/>
        <dbReference type="ChEBI" id="CHEBI:15378"/>
        <dbReference type="ChEBI" id="CHEBI:57856"/>
        <dbReference type="ChEBI" id="CHEBI:59789"/>
        <dbReference type="ChEBI" id="CHEBI:74269"/>
        <dbReference type="ChEBI" id="CHEBI:74513"/>
        <dbReference type="EC" id="2.1.1.216"/>
    </reaction>
</comment>
<comment type="similarity">
    <text evidence="1">Belongs to the class I-like SAM-binding methyltransferase superfamily. Trm1 family.</text>
</comment>
<sequence length="375" mass="42201">MKYITEGNTKLKIPEDATISKKDKIFYNPIMEVNRDISVSIVQSFLNKYDRDEFFICDPLGGSGARGLRYANELKINSGTGAPHITIGDINPNAISLAQENAKLNNLNNVNIVHKDANVLLSENFRKFNVVDIDPFGAPSPYLDSAIRSIITKNGILCMTATDTAVLYGSYRKTCIRNYDATPLKGNKELAIRLLVGHAIRMASKYDIGLKPIFSHFTAHYVRTFLMTERGAKKADEAVDKLGYVKNIEEEYIIKSRKEGNSDGFCGLYYLDNLTDENITKDAIKIAEERNYSKESVKVMKTVYEESLINNVGCYDVHKICKNIKKKVPPVDILMSGLNEMGFNACRTHHNPHSIKSDAKLIDIVEFIYKYDGNK</sequence>
<proteinExistence type="inferred from homology"/>